<gene>
    <name evidence="1" type="primary">mobA</name>
    <name type="ordered locus">VFMJ11_1489</name>
</gene>
<name>MOBA_ALIFM</name>
<comment type="function">
    <text evidence="1">Transfers a GMP moiety from GTP to Mo-molybdopterin (Mo-MPT) cofactor (Moco or molybdenum cofactor) to form Mo-molybdopterin guanine dinucleotide (Mo-MGD) cofactor.</text>
</comment>
<comment type="catalytic activity">
    <reaction evidence="1">
        <text>Mo-molybdopterin + GTP + H(+) = Mo-molybdopterin guanine dinucleotide + diphosphate</text>
        <dbReference type="Rhea" id="RHEA:34243"/>
        <dbReference type="ChEBI" id="CHEBI:15378"/>
        <dbReference type="ChEBI" id="CHEBI:33019"/>
        <dbReference type="ChEBI" id="CHEBI:37565"/>
        <dbReference type="ChEBI" id="CHEBI:71302"/>
        <dbReference type="ChEBI" id="CHEBI:71310"/>
        <dbReference type="EC" id="2.7.7.77"/>
    </reaction>
</comment>
<comment type="cofactor">
    <cofactor evidence="1">
        <name>Mg(2+)</name>
        <dbReference type="ChEBI" id="CHEBI:18420"/>
    </cofactor>
</comment>
<comment type="subunit">
    <text evidence="1">Monomer.</text>
</comment>
<comment type="subcellular location">
    <subcellularLocation>
        <location evidence="1">Cytoplasm</location>
    </subcellularLocation>
</comment>
<comment type="domain">
    <text evidence="1">The N-terminal domain determines nucleotide recognition and specific binding, while the C-terminal domain determines the specific binding to the target protein.</text>
</comment>
<comment type="similarity">
    <text evidence="1">Belongs to the MobA family.</text>
</comment>
<organism>
    <name type="scientific">Aliivibrio fischeri (strain MJ11)</name>
    <name type="common">Vibrio fischeri</name>
    <dbReference type="NCBI Taxonomy" id="388396"/>
    <lineage>
        <taxon>Bacteria</taxon>
        <taxon>Pseudomonadati</taxon>
        <taxon>Pseudomonadota</taxon>
        <taxon>Gammaproteobacteria</taxon>
        <taxon>Vibrionales</taxon>
        <taxon>Vibrionaceae</taxon>
        <taxon>Aliivibrio</taxon>
    </lineage>
</organism>
<feature type="chain" id="PRO_1000115810" description="Molybdenum cofactor guanylyltransferase">
    <location>
        <begin position="1"/>
        <end position="194"/>
    </location>
</feature>
<feature type="binding site" evidence="1">
    <location>
        <begin position="12"/>
        <end position="14"/>
    </location>
    <ligand>
        <name>GTP</name>
        <dbReference type="ChEBI" id="CHEBI:37565"/>
    </ligand>
</feature>
<feature type="binding site" evidence="1">
    <location>
        <position position="25"/>
    </location>
    <ligand>
        <name>GTP</name>
        <dbReference type="ChEBI" id="CHEBI:37565"/>
    </ligand>
</feature>
<feature type="binding site" evidence="1">
    <location>
        <position position="53"/>
    </location>
    <ligand>
        <name>GTP</name>
        <dbReference type="ChEBI" id="CHEBI:37565"/>
    </ligand>
</feature>
<feature type="binding site" evidence="1">
    <location>
        <position position="70"/>
    </location>
    <ligand>
        <name>GTP</name>
        <dbReference type="ChEBI" id="CHEBI:37565"/>
    </ligand>
</feature>
<feature type="binding site" evidence="1">
    <location>
        <position position="100"/>
    </location>
    <ligand>
        <name>GTP</name>
        <dbReference type="ChEBI" id="CHEBI:37565"/>
    </ligand>
</feature>
<feature type="binding site" evidence="1">
    <location>
        <position position="100"/>
    </location>
    <ligand>
        <name>Mg(2+)</name>
        <dbReference type="ChEBI" id="CHEBI:18420"/>
    </ligand>
</feature>
<protein>
    <recommendedName>
        <fullName evidence="1">Molybdenum cofactor guanylyltransferase</fullName>
        <shortName evidence="1">MoCo guanylyltransferase</shortName>
        <ecNumber evidence="1">2.7.7.77</ecNumber>
    </recommendedName>
    <alternativeName>
        <fullName evidence="1">GTP:molybdopterin guanylyltransferase</fullName>
    </alternativeName>
    <alternativeName>
        <fullName evidence="1">Mo-MPT guanylyltransferase</fullName>
    </alternativeName>
    <alternativeName>
        <fullName evidence="1">Molybdopterin guanylyltransferase</fullName>
    </alternativeName>
    <alternativeName>
        <fullName evidence="1">Molybdopterin-guanine dinucleotide synthase</fullName>
        <shortName evidence="1">MGD synthase</shortName>
    </alternativeName>
</protein>
<evidence type="ECO:0000255" key="1">
    <source>
        <dbReference type="HAMAP-Rule" id="MF_00316"/>
    </source>
</evidence>
<reference key="1">
    <citation type="submission" date="2008-08" db="EMBL/GenBank/DDBJ databases">
        <title>Complete sequence of Vibrio fischeri strain MJ11.</title>
        <authorList>
            <person name="Mandel M.J."/>
            <person name="Stabb E.V."/>
            <person name="Ruby E.G."/>
            <person name="Ferriera S."/>
            <person name="Johnson J."/>
            <person name="Kravitz S."/>
            <person name="Beeson K."/>
            <person name="Sutton G."/>
            <person name="Rogers Y.-H."/>
            <person name="Friedman R."/>
            <person name="Frazier M."/>
            <person name="Venter J.C."/>
        </authorList>
    </citation>
    <scope>NUCLEOTIDE SEQUENCE [LARGE SCALE GENOMIC DNA]</scope>
    <source>
        <strain>MJ11</strain>
    </source>
</reference>
<accession>B5FEE3</accession>
<sequence>MLQPKQTSWVILAGGQARRMGGKDKGFVLFQNKPLIEHALDTLTSQTDQIAINANRSIEEYSRYAVTFSDQFSEYPGPLAGMHSGLVNMNSDWVGFIPCDSPNLPNNLVSLLCNAVKEDTDIVVAHDGEYMQPVVTLMHKRIIPKIDAFLTRGDRKIILLYKECNTVFADFSDYPNAFINLNSPQELEQFGTLL</sequence>
<dbReference type="EC" id="2.7.7.77" evidence="1"/>
<dbReference type="EMBL" id="CP001139">
    <property type="protein sequence ID" value="ACH65610.1"/>
    <property type="molecule type" value="Genomic_DNA"/>
</dbReference>
<dbReference type="RefSeq" id="WP_012533170.1">
    <property type="nucleotide sequence ID" value="NC_011184.1"/>
</dbReference>
<dbReference type="SMR" id="B5FEE3"/>
<dbReference type="KEGG" id="vfm:VFMJ11_1489"/>
<dbReference type="HOGENOM" id="CLU_055597_5_1_6"/>
<dbReference type="Proteomes" id="UP000001857">
    <property type="component" value="Chromosome I"/>
</dbReference>
<dbReference type="GO" id="GO:0005737">
    <property type="term" value="C:cytoplasm"/>
    <property type="evidence" value="ECO:0007669"/>
    <property type="project" value="UniProtKB-SubCell"/>
</dbReference>
<dbReference type="GO" id="GO:0005525">
    <property type="term" value="F:GTP binding"/>
    <property type="evidence" value="ECO:0007669"/>
    <property type="project" value="UniProtKB-UniRule"/>
</dbReference>
<dbReference type="GO" id="GO:0046872">
    <property type="term" value="F:metal ion binding"/>
    <property type="evidence" value="ECO:0007669"/>
    <property type="project" value="UniProtKB-KW"/>
</dbReference>
<dbReference type="GO" id="GO:0061603">
    <property type="term" value="F:molybdenum cofactor guanylyltransferase activity"/>
    <property type="evidence" value="ECO:0007669"/>
    <property type="project" value="UniProtKB-EC"/>
</dbReference>
<dbReference type="GO" id="GO:1902758">
    <property type="term" value="P:bis(molybdopterin guanine dinucleotide)molybdenum biosynthetic process"/>
    <property type="evidence" value="ECO:0007669"/>
    <property type="project" value="TreeGrafter"/>
</dbReference>
<dbReference type="CDD" id="cd02503">
    <property type="entry name" value="MobA"/>
    <property type="match status" value="1"/>
</dbReference>
<dbReference type="Gene3D" id="3.90.550.10">
    <property type="entry name" value="Spore Coat Polysaccharide Biosynthesis Protein SpsA, Chain A"/>
    <property type="match status" value="1"/>
</dbReference>
<dbReference type="HAMAP" id="MF_00316">
    <property type="entry name" value="MobA"/>
    <property type="match status" value="1"/>
</dbReference>
<dbReference type="InterPro" id="IPR025877">
    <property type="entry name" value="MobA-like_NTP_Trfase"/>
</dbReference>
<dbReference type="InterPro" id="IPR013482">
    <property type="entry name" value="Molybde_CF_guanTrfase"/>
</dbReference>
<dbReference type="InterPro" id="IPR029044">
    <property type="entry name" value="Nucleotide-diphossugar_trans"/>
</dbReference>
<dbReference type="NCBIfam" id="TIGR02665">
    <property type="entry name" value="molyb_mobA"/>
    <property type="match status" value="1"/>
</dbReference>
<dbReference type="PANTHER" id="PTHR19136">
    <property type="entry name" value="MOLYBDENUM COFACTOR GUANYLYLTRANSFERASE"/>
    <property type="match status" value="1"/>
</dbReference>
<dbReference type="PANTHER" id="PTHR19136:SF81">
    <property type="entry name" value="MOLYBDENUM COFACTOR GUANYLYLTRANSFERASE"/>
    <property type="match status" value="1"/>
</dbReference>
<dbReference type="Pfam" id="PF12804">
    <property type="entry name" value="NTP_transf_3"/>
    <property type="match status" value="1"/>
</dbReference>
<dbReference type="SUPFAM" id="SSF53448">
    <property type="entry name" value="Nucleotide-diphospho-sugar transferases"/>
    <property type="match status" value="1"/>
</dbReference>
<proteinExistence type="inferred from homology"/>
<keyword id="KW-0963">Cytoplasm</keyword>
<keyword id="KW-0342">GTP-binding</keyword>
<keyword id="KW-0460">Magnesium</keyword>
<keyword id="KW-0479">Metal-binding</keyword>
<keyword id="KW-0501">Molybdenum cofactor biosynthesis</keyword>
<keyword id="KW-0547">Nucleotide-binding</keyword>
<keyword id="KW-0808">Transferase</keyword>